<organism>
    <name type="scientific">Yersinia enterocolitica serotype O:8 / biotype 1B (strain NCTC 13174 / 8081)</name>
    <dbReference type="NCBI Taxonomy" id="393305"/>
    <lineage>
        <taxon>Bacteria</taxon>
        <taxon>Pseudomonadati</taxon>
        <taxon>Pseudomonadota</taxon>
        <taxon>Gammaproteobacteria</taxon>
        <taxon>Enterobacterales</taxon>
        <taxon>Yersiniaceae</taxon>
        <taxon>Yersinia</taxon>
    </lineage>
</organism>
<gene>
    <name evidence="1" type="primary">dxr</name>
    <name type="ordered locus">YE3280</name>
</gene>
<name>DXR_YERE8</name>
<evidence type="ECO:0000255" key="1">
    <source>
        <dbReference type="HAMAP-Rule" id="MF_00183"/>
    </source>
</evidence>
<comment type="function">
    <text evidence="1">Catalyzes the NADPH-dependent rearrangement and reduction of 1-deoxy-D-xylulose-5-phosphate (DXP) to 2-C-methyl-D-erythritol 4-phosphate (MEP).</text>
</comment>
<comment type="catalytic activity">
    <reaction evidence="1">
        <text>2-C-methyl-D-erythritol 4-phosphate + NADP(+) = 1-deoxy-D-xylulose 5-phosphate + NADPH + H(+)</text>
        <dbReference type="Rhea" id="RHEA:13717"/>
        <dbReference type="ChEBI" id="CHEBI:15378"/>
        <dbReference type="ChEBI" id="CHEBI:57783"/>
        <dbReference type="ChEBI" id="CHEBI:57792"/>
        <dbReference type="ChEBI" id="CHEBI:58262"/>
        <dbReference type="ChEBI" id="CHEBI:58349"/>
        <dbReference type="EC" id="1.1.1.267"/>
    </reaction>
    <physiologicalReaction direction="right-to-left" evidence="1">
        <dbReference type="Rhea" id="RHEA:13719"/>
    </physiologicalReaction>
</comment>
<comment type="cofactor">
    <cofactor evidence="1">
        <name>Mg(2+)</name>
        <dbReference type="ChEBI" id="CHEBI:18420"/>
    </cofactor>
    <cofactor evidence="1">
        <name>Mn(2+)</name>
        <dbReference type="ChEBI" id="CHEBI:29035"/>
    </cofactor>
</comment>
<comment type="pathway">
    <text evidence="1">Isoprenoid biosynthesis; isopentenyl diphosphate biosynthesis via DXP pathway; isopentenyl diphosphate from 1-deoxy-D-xylulose 5-phosphate: step 1/6.</text>
</comment>
<comment type="subunit">
    <text evidence="1">Homodimer.</text>
</comment>
<comment type="similarity">
    <text evidence="1">Belongs to the DXR family.</text>
</comment>
<keyword id="KW-0414">Isoprene biosynthesis</keyword>
<keyword id="KW-0464">Manganese</keyword>
<keyword id="KW-0479">Metal-binding</keyword>
<keyword id="KW-0521">NADP</keyword>
<keyword id="KW-0560">Oxidoreductase</keyword>
<dbReference type="EC" id="1.1.1.267" evidence="1"/>
<dbReference type="EMBL" id="AM286415">
    <property type="protein sequence ID" value="CAL13310.1"/>
    <property type="molecule type" value="Genomic_DNA"/>
</dbReference>
<dbReference type="RefSeq" id="WP_011816968.1">
    <property type="nucleotide sequence ID" value="NC_008800.1"/>
</dbReference>
<dbReference type="RefSeq" id="YP_001007454.1">
    <property type="nucleotide sequence ID" value="NC_008800.1"/>
</dbReference>
<dbReference type="SMR" id="A1JP78"/>
<dbReference type="KEGG" id="yen:YE3280"/>
<dbReference type="PATRIC" id="fig|393305.7.peg.3488"/>
<dbReference type="eggNOG" id="COG0743">
    <property type="taxonomic scope" value="Bacteria"/>
</dbReference>
<dbReference type="HOGENOM" id="CLU_035714_4_0_6"/>
<dbReference type="OrthoDB" id="9806546at2"/>
<dbReference type="UniPathway" id="UPA00056">
    <property type="reaction ID" value="UER00092"/>
</dbReference>
<dbReference type="Proteomes" id="UP000000642">
    <property type="component" value="Chromosome"/>
</dbReference>
<dbReference type="GO" id="GO:0030604">
    <property type="term" value="F:1-deoxy-D-xylulose-5-phosphate reductoisomerase activity"/>
    <property type="evidence" value="ECO:0007669"/>
    <property type="project" value="UniProtKB-UniRule"/>
</dbReference>
<dbReference type="GO" id="GO:0030145">
    <property type="term" value="F:manganese ion binding"/>
    <property type="evidence" value="ECO:0007669"/>
    <property type="project" value="TreeGrafter"/>
</dbReference>
<dbReference type="GO" id="GO:0070402">
    <property type="term" value="F:NADPH binding"/>
    <property type="evidence" value="ECO:0007669"/>
    <property type="project" value="InterPro"/>
</dbReference>
<dbReference type="GO" id="GO:0051484">
    <property type="term" value="P:isopentenyl diphosphate biosynthetic process, methylerythritol 4-phosphate pathway involved in terpenoid biosynthetic process"/>
    <property type="evidence" value="ECO:0007669"/>
    <property type="project" value="TreeGrafter"/>
</dbReference>
<dbReference type="FunFam" id="1.10.1740.10:FF:000004">
    <property type="entry name" value="1-deoxy-D-xylulose 5-phosphate reductoisomerase"/>
    <property type="match status" value="1"/>
</dbReference>
<dbReference type="FunFam" id="3.40.50.720:FF:000045">
    <property type="entry name" value="1-deoxy-D-xylulose 5-phosphate reductoisomerase"/>
    <property type="match status" value="1"/>
</dbReference>
<dbReference type="Gene3D" id="1.10.1740.10">
    <property type="match status" value="1"/>
</dbReference>
<dbReference type="Gene3D" id="3.40.50.720">
    <property type="entry name" value="NAD(P)-binding Rossmann-like Domain"/>
    <property type="match status" value="1"/>
</dbReference>
<dbReference type="HAMAP" id="MF_00183">
    <property type="entry name" value="DXP_reductoisom"/>
    <property type="match status" value="1"/>
</dbReference>
<dbReference type="InterPro" id="IPR003821">
    <property type="entry name" value="DXP_reductoisomerase"/>
</dbReference>
<dbReference type="InterPro" id="IPR013644">
    <property type="entry name" value="DXP_reductoisomerase_C"/>
</dbReference>
<dbReference type="InterPro" id="IPR013512">
    <property type="entry name" value="DXP_reductoisomerase_N"/>
</dbReference>
<dbReference type="InterPro" id="IPR026877">
    <property type="entry name" value="DXPR_C"/>
</dbReference>
<dbReference type="InterPro" id="IPR036169">
    <property type="entry name" value="DXPR_C_sf"/>
</dbReference>
<dbReference type="InterPro" id="IPR036291">
    <property type="entry name" value="NAD(P)-bd_dom_sf"/>
</dbReference>
<dbReference type="NCBIfam" id="TIGR00243">
    <property type="entry name" value="Dxr"/>
    <property type="match status" value="1"/>
</dbReference>
<dbReference type="NCBIfam" id="NF003938">
    <property type="entry name" value="PRK05447.1-1"/>
    <property type="match status" value="1"/>
</dbReference>
<dbReference type="NCBIfam" id="NF009114">
    <property type="entry name" value="PRK12464.1"/>
    <property type="match status" value="1"/>
</dbReference>
<dbReference type="PANTHER" id="PTHR30525">
    <property type="entry name" value="1-DEOXY-D-XYLULOSE 5-PHOSPHATE REDUCTOISOMERASE"/>
    <property type="match status" value="1"/>
</dbReference>
<dbReference type="PANTHER" id="PTHR30525:SF0">
    <property type="entry name" value="1-DEOXY-D-XYLULOSE 5-PHOSPHATE REDUCTOISOMERASE, CHLOROPLASTIC"/>
    <property type="match status" value="1"/>
</dbReference>
<dbReference type="Pfam" id="PF08436">
    <property type="entry name" value="DXP_redisom_C"/>
    <property type="match status" value="1"/>
</dbReference>
<dbReference type="Pfam" id="PF02670">
    <property type="entry name" value="DXP_reductoisom"/>
    <property type="match status" value="1"/>
</dbReference>
<dbReference type="Pfam" id="PF13288">
    <property type="entry name" value="DXPR_C"/>
    <property type="match status" value="1"/>
</dbReference>
<dbReference type="PIRSF" id="PIRSF006205">
    <property type="entry name" value="Dxp_reductismrs"/>
    <property type="match status" value="1"/>
</dbReference>
<dbReference type="SUPFAM" id="SSF69055">
    <property type="entry name" value="1-deoxy-D-xylulose-5-phosphate reductoisomerase, C-terminal domain"/>
    <property type="match status" value="1"/>
</dbReference>
<dbReference type="SUPFAM" id="SSF55347">
    <property type="entry name" value="Glyceraldehyde-3-phosphate dehydrogenase-like, C-terminal domain"/>
    <property type="match status" value="1"/>
</dbReference>
<dbReference type="SUPFAM" id="SSF51735">
    <property type="entry name" value="NAD(P)-binding Rossmann-fold domains"/>
    <property type="match status" value="1"/>
</dbReference>
<protein>
    <recommendedName>
        <fullName evidence="1">1-deoxy-D-xylulose 5-phosphate reductoisomerase</fullName>
        <shortName evidence="1">DXP reductoisomerase</shortName>
        <ecNumber evidence="1">1.1.1.267</ecNumber>
    </recommendedName>
    <alternativeName>
        <fullName evidence="1">1-deoxyxylulose-5-phosphate reductoisomerase</fullName>
    </alternativeName>
    <alternativeName>
        <fullName evidence="1">2-C-methyl-D-erythritol 4-phosphate synthase</fullName>
    </alternativeName>
</protein>
<reference key="1">
    <citation type="journal article" date="2006" name="PLoS Genet.">
        <title>The complete genome sequence and comparative genome analysis of the high pathogenicity Yersinia enterocolitica strain 8081.</title>
        <authorList>
            <person name="Thomson N.R."/>
            <person name="Howard S."/>
            <person name="Wren B.W."/>
            <person name="Holden M.T.G."/>
            <person name="Crossman L."/>
            <person name="Challis G.L."/>
            <person name="Churcher C."/>
            <person name="Mungall K."/>
            <person name="Brooks K."/>
            <person name="Chillingworth T."/>
            <person name="Feltwell T."/>
            <person name="Abdellah Z."/>
            <person name="Hauser H."/>
            <person name="Jagels K."/>
            <person name="Maddison M."/>
            <person name="Moule S."/>
            <person name="Sanders M."/>
            <person name="Whitehead S."/>
            <person name="Quail M.A."/>
            <person name="Dougan G."/>
            <person name="Parkhill J."/>
            <person name="Prentice M.B."/>
        </authorList>
    </citation>
    <scope>NUCLEOTIDE SEQUENCE [LARGE SCALE GENOMIC DNA]</scope>
    <source>
        <strain>NCTC 13174 / 8081</strain>
    </source>
</reference>
<feature type="chain" id="PRO_1000020325" description="1-deoxy-D-xylulose 5-phosphate reductoisomerase">
    <location>
        <begin position="1"/>
        <end position="398"/>
    </location>
</feature>
<feature type="binding site" evidence="1">
    <location>
        <position position="10"/>
    </location>
    <ligand>
        <name>NADPH</name>
        <dbReference type="ChEBI" id="CHEBI:57783"/>
    </ligand>
</feature>
<feature type="binding site" evidence="1">
    <location>
        <position position="11"/>
    </location>
    <ligand>
        <name>NADPH</name>
        <dbReference type="ChEBI" id="CHEBI:57783"/>
    </ligand>
</feature>
<feature type="binding site" evidence="1">
    <location>
        <position position="12"/>
    </location>
    <ligand>
        <name>NADPH</name>
        <dbReference type="ChEBI" id="CHEBI:57783"/>
    </ligand>
</feature>
<feature type="binding site" evidence="1">
    <location>
        <position position="13"/>
    </location>
    <ligand>
        <name>NADPH</name>
        <dbReference type="ChEBI" id="CHEBI:57783"/>
    </ligand>
</feature>
<feature type="binding site" evidence="1">
    <location>
        <position position="36"/>
    </location>
    <ligand>
        <name>NADPH</name>
        <dbReference type="ChEBI" id="CHEBI:57783"/>
    </ligand>
</feature>
<feature type="binding site" evidence="1">
    <location>
        <position position="37"/>
    </location>
    <ligand>
        <name>NADPH</name>
        <dbReference type="ChEBI" id="CHEBI:57783"/>
    </ligand>
</feature>
<feature type="binding site" evidence="1">
    <location>
        <position position="38"/>
    </location>
    <ligand>
        <name>NADPH</name>
        <dbReference type="ChEBI" id="CHEBI:57783"/>
    </ligand>
</feature>
<feature type="binding site" evidence="1">
    <location>
        <position position="124"/>
    </location>
    <ligand>
        <name>NADPH</name>
        <dbReference type="ChEBI" id="CHEBI:57783"/>
    </ligand>
</feature>
<feature type="binding site" evidence="1">
    <location>
        <position position="125"/>
    </location>
    <ligand>
        <name>1-deoxy-D-xylulose 5-phosphate</name>
        <dbReference type="ChEBI" id="CHEBI:57792"/>
    </ligand>
</feature>
<feature type="binding site" evidence="1">
    <location>
        <position position="126"/>
    </location>
    <ligand>
        <name>NADPH</name>
        <dbReference type="ChEBI" id="CHEBI:57783"/>
    </ligand>
</feature>
<feature type="binding site" evidence="1">
    <location>
        <position position="150"/>
    </location>
    <ligand>
        <name>Mn(2+)</name>
        <dbReference type="ChEBI" id="CHEBI:29035"/>
    </ligand>
</feature>
<feature type="binding site" evidence="1">
    <location>
        <position position="151"/>
    </location>
    <ligand>
        <name>1-deoxy-D-xylulose 5-phosphate</name>
        <dbReference type="ChEBI" id="CHEBI:57792"/>
    </ligand>
</feature>
<feature type="binding site" evidence="1">
    <location>
        <position position="152"/>
    </location>
    <ligand>
        <name>1-deoxy-D-xylulose 5-phosphate</name>
        <dbReference type="ChEBI" id="CHEBI:57792"/>
    </ligand>
</feature>
<feature type="binding site" evidence="1">
    <location>
        <position position="152"/>
    </location>
    <ligand>
        <name>Mn(2+)</name>
        <dbReference type="ChEBI" id="CHEBI:29035"/>
    </ligand>
</feature>
<feature type="binding site" evidence="1">
    <location>
        <position position="186"/>
    </location>
    <ligand>
        <name>1-deoxy-D-xylulose 5-phosphate</name>
        <dbReference type="ChEBI" id="CHEBI:57792"/>
    </ligand>
</feature>
<feature type="binding site" evidence="1">
    <location>
        <position position="209"/>
    </location>
    <ligand>
        <name>1-deoxy-D-xylulose 5-phosphate</name>
        <dbReference type="ChEBI" id="CHEBI:57792"/>
    </ligand>
</feature>
<feature type="binding site" evidence="1">
    <location>
        <position position="215"/>
    </location>
    <ligand>
        <name>NADPH</name>
        <dbReference type="ChEBI" id="CHEBI:57783"/>
    </ligand>
</feature>
<feature type="binding site" evidence="1">
    <location>
        <position position="222"/>
    </location>
    <ligand>
        <name>1-deoxy-D-xylulose 5-phosphate</name>
        <dbReference type="ChEBI" id="CHEBI:57792"/>
    </ligand>
</feature>
<feature type="binding site" evidence="1">
    <location>
        <position position="227"/>
    </location>
    <ligand>
        <name>1-deoxy-D-xylulose 5-phosphate</name>
        <dbReference type="ChEBI" id="CHEBI:57792"/>
    </ligand>
</feature>
<feature type="binding site" evidence="1">
    <location>
        <position position="228"/>
    </location>
    <ligand>
        <name>1-deoxy-D-xylulose 5-phosphate</name>
        <dbReference type="ChEBI" id="CHEBI:57792"/>
    </ligand>
</feature>
<feature type="binding site" evidence="1">
    <location>
        <position position="231"/>
    </location>
    <ligand>
        <name>1-deoxy-D-xylulose 5-phosphate</name>
        <dbReference type="ChEBI" id="CHEBI:57792"/>
    </ligand>
</feature>
<feature type="binding site" evidence="1">
    <location>
        <position position="231"/>
    </location>
    <ligand>
        <name>Mn(2+)</name>
        <dbReference type="ChEBI" id="CHEBI:29035"/>
    </ligand>
</feature>
<sequence>MKQLTILGSTGSIGNSTLGVVRANPELFKITALVAGRNVHQMAQQCLEFAPRYAAMSDETSAKALRLILAENGSRTEVYSGEKAACELAAIDDVDQVMAAIVGVAGLPSTLAAIRAGKQVLLANKESLITCGKLFMDEVMHSRAQLLPIDSEHNAIFQSLPEKVQSQLGYSSLSDNGVSRIILTGSGGPLRETPLVQFADVTPDQACAHPNWSMGRKISVDSATMMNKGLEYIEARWLFNASAEQVEVILHPQSVIHSMVRYHDGSVLAQMGTPDMRTPIAHAMAYPMRVNSGVAPLDFCKIRELTFAEPDYQRYPCLKLAIDASNAGQAATTALNAANEISVMAFLDSRIRFTDIAVINRMVVEQLSLPEPASVDEVLVIDRKARDAAVQAIAKLNN</sequence>
<proteinExistence type="inferred from homology"/>
<accession>A1JP78</accession>